<name>ST1A1_RAT</name>
<accession>P17988</accession>
<accession>Q548D2</accession>
<gene>
    <name type="primary">Sult1a1</name>
    <name type="synonym">St1a1</name>
</gene>
<protein>
    <recommendedName>
        <fullName>Sulfotransferase 1A1</fullName>
        <shortName>ST1A1</shortName>
        <ecNumber evidence="3 4 6">2.8.2.1</ecNumber>
    </recommendedName>
    <alternativeName>
        <fullName>Aryl sulfotransferase</fullName>
    </alternativeName>
    <alternativeName>
        <fullName>Aryl sulfotransferase IV</fullName>
        <shortName>ASTIV</shortName>
    </alternativeName>
    <alternativeName>
        <fullName evidence="7">Minoxidil sulfotransferase</fullName>
        <shortName evidence="7">Mx-ST</shortName>
    </alternativeName>
    <alternativeName>
        <fullName evidence="8">PST-1</fullName>
    </alternativeName>
    <alternativeName>
        <fullName>Phenol sulfotransferase</fullName>
    </alternativeName>
    <alternativeName>
        <fullName>Sulfokinase</fullName>
    </alternativeName>
    <alternativeName>
        <fullName>Tyrosine-ester sulfotransferase</fullName>
    </alternativeName>
</protein>
<evidence type="ECO:0000250" key="1">
    <source>
        <dbReference type="UniProtKB" id="P0DMM9"/>
    </source>
</evidence>
<evidence type="ECO:0000250" key="2">
    <source>
        <dbReference type="UniProtKB" id="P50225"/>
    </source>
</evidence>
<evidence type="ECO:0000269" key="3">
    <source>
    </source>
</evidence>
<evidence type="ECO:0000269" key="4">
    <source>
    </source>
</evidence>
<evidence type="ECO:0000269" key="5">
    <source>
    </source>
</evidence>
<evidence type="ECO:0000269" key="6">
    <source>
    </source>
</evidence>
<evidence type="ECO:0000303" key="7">
    <source>
    </source>
</evidence>
<evidence type="ECO:0000303" key="8">
    <source>
    </source>
</evidence>
<evidence type="ECO:0000305" key="9"/>
<evidence type="ECO:0007744" key="10">
    <source>
    </source>
</evidence>
<keyword id="KW-0963">Cytoplasm</keyword>
<keyword id="KW-0903">Direct protein sequencing</keyword>
<keyword id="KW-0443">Lipid metabolism</keyword>
<keyword id="KW-0597">Phosphoprotein</keyword>
<keyword id="KW-1185">Reference proteome</keyword>
<keyword id="KW-0753">Steroid metabolism</keyword>
<keyword id="KW-0808">Transferase</keyword>
<feature type="chain" id="PRO_0000085131" description="Sulfotransferase 1A1">
    <location>
        <begin position="1"/>
        <end position="291"/>
    </location>
</feature>
<feature type="active site" description="Proton acceptor" evidence="1">
    <location>
        <position position="104"/>
    </location>
</feature>
<feature type="binding site" evidence="2">
    <location>
        <begin position="44"/>
        <end position="49"/>
    </location>
    <ligand>
        <name>3'-phosphoadenylyl sulfate</name>
        <dbReference type="ChEBI" id="CHEBI:58339"/>
    </ligand>
</feature>
<feature type="binding site" evidence="2">
    <location>
        <begin position="102"/>
        <end position="104"/>
    </location>
    <ligand>
        <name>substrate</name>
    </ligand>
</feature>
<feature type="binding site" evidence="2">
    <location>
        <position position="126"/>
    </location>
    <ligand>
        <name>3'-phosphoadenylyl sulfate</name>
        <dbReference type="ChEBI" id="CHEBI:58339"/>
    </ligand>
</feature>
<feature type="binding site" evidence="2">
    <location>
        <position position="134"/>
    </location>
    <ligand>
        <name>3'-phosphoadenylyl sulfate</name>
        <dbReference type="ChEBI" id="CHEBI:58339"/>
    </ligand>
</feature>
<feature type="binding site" evidence="2">
    <location>
        <position position="189"/>
    </location>
    <ligand>
        <name>3'-phosphoadenylyl sulfate</name>
        <dbReference type="ChEBI" id="CHEBI:58339"/>
    </ligand>
</feature>
<feature type="binding site" evidence="2">
    <location>
        <begin position="223"/>
        <end position="228"/>
    </location>
    <ligand>
        <name>3'-phosphoadenylyl sulfate</name>
        <dbReference type="ChEBI" id="CHEBI:58339"/>
    </ligand>
</feature>
<feature type="binding site" evidence="2">
    <location>
        <begin position="251"/>
        <end position="255"/>
    </location>
    <ligand>
        <name>3'-phosphoadenylyl sulfate</name>
        <dbReference type="ChEBI" id="CHEBI:58339"/>
    </ligand>
</feature>
<feature type="modified residue" description="Phosphoserine" evidence="10">
    <location>
        <position position="134"/>
    </location>
</feature>
<organism>
    <name type="scientific">Rattus norvegicus</name>
    <name type="common">Rat</name>
    <dbReference type="NCBI Taxonomy" id="10116"/>
    <lineage>
        <taxon>Eukaryota</taxon>
        <taxon>Metazoa</taxon>
        <taxon>Chordata</taxon>
        <taxon>Craniata</taxon>
        <taxon>Vertebrata</taxon>
        <taxon>Euteleostomi</taxon>
        <taxon>Mammalia</taxon>
        <taxon>Eutheria</taxon>
        <taxon>Euarchontoglires</taxon>
        <taxon>Glires</taxon>
        <taxon>Rodentia</taxon>
        <taxon>Myomorpha</taxon>
        <taxon>Muroidea</taxon>
        <taxon>Muridae</taxon>
        <taxon>Murinae</taxon>
        <taxon>Rattus</taxon>
    </lineage>
</organism>
<proteinExistence type="evidence at protein level"/>
<comment type="function">
    <text evidence="2 3 4 6">Sulfotransferase that utilizes 3'-phospho-5'-adenylyl sulfate (PAPS) as sulfonate donor to catalyze the sulfate conjugation of a wide variety of acceptor molecules bearing a hydroxyl or an amine group. Sulfonation increases the water solubility of most compounds, and therefore their renal excretion, but it can also result in bioactivation to form active metabolites. Displays broad substrate specificity for small phenolic compounds (PubMed:1513323, PubMed:7889867, PubMed:8447833). Plays an important roles in the sulfonation of endogenous molecules such as steroid hormones (By similarity). Mediates the sulfate conjugation of a variety of xenobiotics, including the drugs acetaminophen and minoxidil (PubMed:1513323). Mediates also the metabolic activation of carcinogenic N-hydroxyarylamines leading to highly reactive intermediates capable of forming DNA adducts, potentially resulting in mutagenesis (By similarity). May play a role in gut microbiota-host metabolic interaction. O-sulfonates 4-ethylphenol (4-EP), a dietary tyrosine-derived metabolite produced by gut bacteria. The product 4-EPS crosses the blood-brain barrier and may negatively regulate oligodendrocyte maturation and myelination, affecting the functional connectivity of different brain regions associated with the limbic system. Catalyzes the sulfate conjugation of dopamine. Catalyzes the sulfation of T4 (L-thyroxine/3,5,3',5'-tetraiodothyronine), T3 (3,5,3'-triiodothyronine), rT3 (3,3',5'-triiodothyronine) and 3,3'-T2 (3,3'-diiodothyronine), with a substrate preference of 3,3'-T2 &gt; rT3 &gt; T3 &gt; T4 (By similarity).</text>
</comment>
<comment type="catalytic activity">
    <reaction evidence="3 4 6">
        <text>a phenol + 3'-phosphoadenylyl sulfate = an aryl sulfate + adenosine 3',5'-bisphosphate + H(+)</text>
        <dbReference type="Rhea" id="RHEA:12164"/>
        <dbReference type="ChEBI" id="CHEBI:15378"/>
        <dbReference type="ChEBI" id="CHEBI:33853"/>
        <dbReference type="ChEBI" id="CHEBI:58339"/>
        <dbReference type="ChEBI" id="CHEBI:58343"/>
        <dbReference type="ChEBI" id="CHEBI:140317"/>
        <dbReference type="EC" id="2.8.2.1"/>
    </reaction>
    <physiologicalReaction direction="left-to-right" evidence="2">
        <dbReference type="Rhea" id="RHEA:12165"/>
    </physiologicalReaction>
</comment>
<comment type="catalytic activity">
    <reaction evidence="2">
        <text>17beta-estradiol + 3'-phosphoadenylyl sulfate = 17beta-estradiol 3-sulfate + adenosine 3',5'-bisphosphate + H(+)</text>
        <dbReference type="Rhea" id="RHEA:52372"/>
        <dbReference type="ChEBI" id="CHEBI:15378"/>
        <dbReference type="ChEBI" id="CHEBI:16469"/>
        <dbReference type="ChEBI" id="CHEBI:58339"/>
        <dbReference type="ChEBI" id="CHEBI:58343"/>
        <dbReference type="ChEBI" id="CHEBI:136582"/>
    </reaction>
    <physiologicalReaction direction="left-to-right" evidence="2">
        <dbReference type="Rhea" id="RHEA:52373"/>
    </physiologicalReaction>
</comment>
<comment type="catalytic activity">
    <reaction evidence="2">
        <text>4-ethylphenol + 3'-phosphoadenylyl sulfate = 4-ethylphenyl sulfate + adenosine 3',5'-bisphosphate + H(+)</text>
        <dbReference type="Rhea" id="RHEA:70607"/>
        <dbReference type="ChEBI" id="CHEBI:15378"/>
        <dbReference type="ChEBI" id="CHEBI:49584"/>
        <dbReference type="ChEBI" id="CHEBI:58339"/>
        <dbReference type="ChEBI" id="CHEBI:58343"/>
        <dbReference type="ChEBI" id="CHEBI:133681"/>
    </reaction>
    <physiologicalReaction direction="left-to-right" evidence="2">
        <dbReference type="Rhea" id="RHEA:70608"/>
    </physiologicalReaction>
</comment>
<comment type="catalytic activity">
    <reaction evidence="2">
        <text>4-nitrophenol + 3'-phosphoadenylyl sulfate = 4-nitrophenyl sulfate + adenosine 3',5'-bisphosphate</text>
        <dbReference type="Rhea" id="RHEA:66548"/>
        <dbReference type="ChEBI" id="CHEBI:57917"/>
        <dbReference type="ChEBI" id="CHEBI:58339"/>
        <dbReference type="ChEBI" id="CHEBI:58343"/>
        <dbReference type="ChEBI" id="CHEBI:140994"/>
    </reaction>
    <physiologicalReaction direction="left-to-right" evidence="2">
        <dbReference type="Rhea" id="RHEA:66549"/>
    </physiologicalReaction>
</comment>
<comment type="catalytic activity">
    <reaction evidence="2">
        <text>dopamine + 3'-phosphoadenylyl sulfate = dopamine 3-O-sulfate + adenosine 3',5'-bisphosphate + H(+)</text>
        <dbReference type="Rhea" id="RHEA:67880"/>
        <dbReference type="ChEBI" id="CHEBI:15378"/>
        <dbReference type="ChEBI" id="CHEBI:58339"/>
        <dbReference type="ChEBI" id="CHEBI:58343"/>
        <dbReference type="ChEBI" id="CHEBI:59905"/>
        <dbReference type="ChEBI" id="CHEBI:133524"/>
    </reaction>
    <physiologicalReaction direction="left-to-right" evidence="2">
        <dbReference type="Rhea" id="RHEA:67881"/>
    </physiologicalReaction>
</comment>
<comment type="catalytic activity">
    <reaction evidence="2">
        <text>dopamine + 3'-phosphoadenylyl sulfate = dopamine 4-O-sulfate + adenosine 3',5'-bisphosphate + H(+)</text>
        <dbReference type="Rhea" id="RHEA:67884"/>
        <dbReference type="ChEBI" id="CHEBI:15378"/>
        <dbReference type="ChEBI" id="CHEBI:58339"/>
        <dbReference type="ChEBI" id="CHEBI:58343"/>
        <dbReference type="ChEBI" id="CHEBI:59905"/>
        <dbReference type="ChEBI" id="CHEBI:133529"/>
    </reaction>
    <physiologicalReaction direction="left-to-right" evidence="2">
        <dbReference type="Rhea" id="RHEA:67885"/>
    </physiologicalReaction>
</comment>
<comment type="catalytic activity">
    <reaction evidence="2">
        <text>3,3',5-triiodo-L-thyronine + 3'-phosphoadenylyl sulfate = 3,3',5-triiodo-L-thyronine sulfate + adenosine 3',5'-bisphosphate + H(+)</text>
        <dbReference type="Rhea" id="RHEA:67876"/>
        <dbReference type="ChEBI" id="CHEBI:15378"/>
        <dbReference type="ChEBI" id="CHEBI:58339"/>
        <dbReference type="ChEBI" id="CHEBI:58343"/>
        <dbReference type="ChEBI" id="CHEBI:176511"/>
        <dbReference type="ChEBI" id="CHEBI:533015"/>
    </reaction>
    <physiologicalReaction direction="left-to-right" evidence="2">
        <dbReference type="Rhea" id="RHEA:67877"/>
    </physiologicalReaction>
</comment>
<comment type="catalytic activity">
    <reaction evidence="2">
        <text>3,3',5'-triiodo-L-thyronine + 3'-phosphoadenylyl sulfate = 3,3',5'-triiodo-L-thyronine sulfate + adenosine 3',5'-bisphosphate + H(+)</text>
        <dbReference type="Rhea" id="RHEA:67888"/>
        <dbReference type="ChEBI" id="CHEBI:15378"/>
        <dbReference type="ChEBI" id="CHEBI:57261"/>
        <dbReference type="ChEBI" id="CHEBI:58339"/>
        <dbReference type="ChEBI" id="CHEBI:58343"/>
        <dbReference type="ChEBI" id="CHEBI:176513"/>
    </reaction>
    <physiologicalReaction direction="left-to-right" evidence="2">
        <dbReference type="Rhea" id="RHEA:67889"/>
    </physiologicalReaction>
</comment>
<comment type="catalytic activity">
    <reaction evidence="2">
        <text>3,3'-diiodo-L-thyronine + 3'-phosphoadenylyl sulfate = 3,3'-diiodo-L-thyronine sulfate + adenosine 3',5'-bisphosphate + H(+)</text>
        <dbReference type="Rhea" id="RHEA:67892"/>
        <dbReference type="ChEBI" id="CHEBI:15378"/>
        <dbReference type="ChEBI" id="CHEBI:58339"/>
        <dbReference type="ChEBI" id="CHEBI:58343"/>
        <dbReference type="ChEBI" id="CHEBI:176514"/>
        <dbReference type="ChEBI" id="CHEBI:176515"/>
    </reaction>
    <physiologicalReaction direction="left-to-right" evidence="2">
        <dbReference type="Rhea" id="RHEA:67893"/>
    </physiologicalReaction>
</comment>
<comment type="catalytic activity">
    <reaction evidence="2">
        <text>L-thyroxine + 3'-phosphoadenylyl sulfate = L-thyroxine sulfate + adenosine 3',5'-bisphosphate + H(+)</text>
        <dbReference type="Rhea" id="RHEA:83575"/>
        <dbReference type="ChEBI" id="CHEBI:15378"/>
        <dbReference type="ChEBI" id="CHEBI:58339"/>
        <dbReference type="ChEBI" id="CHEBI:58343"/>
        <dbReference type="ChEBI" id="CHEBI:58448"/>
        <dbReference type="ChEBI" id="CHEBI:176512"/>
    </reaction>
    <physiologicalReaction direction="left-to-right" evidence="2">
        <dbReference type="Rhea" id="RHEA:83576"/>
    </physiologicalReaction>
</comment>
<comment type="subunit">
    <text evidence="2">Homodimer.</text>
</comment>
<comment type="subcellular location">
    <subcellularLocation>
        <location evidence="3">Cytoplasm</location>
    </subcellularLocation>
</comment>
<comment type="tissue specificity">
    <text evidence="5">Liver, kidney, heart and colon.</text>
</comment>
<comment type="induction">
    <text>Induced by androgens and suppressed by estrogens. The expression is under the influence of pituitary growth hormone and thyroid hormone.</text>
</comment>
<comment type="PTM">
    <text>The N-terminus is blocked.</text>
</comment>
<comment type="similarity">
    <text evidence="9">Belongs to the sulfotransferase 1 family.</text>
</comment>
<sequence>MEFSRPPLVHVKGIPLIKYFAETIGPLQNFTAWPDDLLISTYPKSGTTWMSEILDMIYQGGKLEKCGRAPIYARVPFLEFKCPGVPSGLETLEETPAPRLLKTHLPLSLLPQSLLDQKVKVIYIARNAKDVVVSYYNFYNMAKLHPDPGTWDSFLENFMDGEVSYGSWYQHVKEWWELRHTHPVLYLFYEDIKENPKREIKKILEFLGRSLPEETVDSIVHHTSFKKMKENCMTNYTTIPTEIMDHNVSPFMRKGTTGDWKNTFTVAQNERFDAHYAKTMTDCDFKFRCEL</sequence>
<reference key="1">
    <citation type="journal article" date="1990" name="Nucleic Acids Res.">
        <title>Nucleotide sequence of a full-length cDNA (PST-1) for aryl sulfotransferase from rat liver.</title>
        <authorList>
            <person name="Ozawa S."/>
            <person name="Nagata K."/>
            <person name="Gong D."/>
            <person name="Yamazoe Y."/>
            <person name="Kato R."/>
        </authorList>
    </citation>
    <scope>NUCLEOTIDE SEQUENCE [MRNA]</scope>
    <source>
        <strain>Sprague-Dawley</strain>
        <tissue>Liver</tissue>
    </source>
</reference>
<reference key="2">
    <citation type="journal article" date="1992" name="Mol. Pharmacol.">
        <title>Sequence analysis, in vitro translation and expression of the cDNA for rat liver minoxidil sulfotransferase.</title>
        <authorList>
            <person name="Hirshey S.J."/>
            <person name="Dooley T.P."/>
            <person name="Reardon I.M."/>
            <person name="Heinrikson R.L."/>
            <person name="Falany C.N."/>
        </authorList>
    </citation>
    <scope>NUCLEOTIDE SEQUENCE [MRNA]</scope>
    <scope>CATALYTIC ACTIVITY</scope>
    <scope>FUNCTION</scope>
    <scope>SUBCELLULAR LOCATION</scope>
    <source>
        <strain>Sprague-Dawley</strain>
        <tissue>Liver</tissue>
    </source>
</reference>
<reference key="3">
    <citation type="journal article" date="1993" name="Gene">
        <title>Genomic structure of rat liver aryl sulfotransferase IV-encoding gene.</title>
        <authorList>
            <person name="Khan A.S."/>
            <person name="Taylor B.R."/>
            <person name="Chung K."/>
            <person name="Etheredge J."/>
            <person name="Gonzales R."/>
            <person name="Ringer D.P."/>
        </authorList>
    </citation>
    <scope>NUCLEOTIDE SEQUENCE [GENOMIC DNA]</scope>
    <source>
        <strain>Sprague-Dawley</strain>
        <tissue>Liver</tissue>
    </source>
</reference>
<reference key="4">
    <citation type="submission" date="2001-07" db="EMBL/GenBank/DDBJ databases">
        <title>Cloning, bacterial expression and characterization of rat brain phenol sulfotransferase SULT1A1: an enzyme involved in neurosteroid and dopamine sulfonation.</title>
        <authorList>
            <person name="Mao C."/>
            <person name="Sanchez R.I."/>
            <person name="Clairmont K."/>
            <person name="Coughtrie M.W.H."/>
            <person name="Kauffman F.C."/>
        </authorList>
    </citation>
    <scope>NUCLEOTIDE SEQUENCE [MRNA]</scope>
    <source>
        <strain>Sprague-Dawley</strain>
        <tissue>Brain</tissue>
    </source>
</reference>
<reference key="5">
    <citation type="journal article" date="1992" name="Cancer Res.">
        <title>Characterization of a complementary DNA for rat liver aryl sulfotransferase IV and use in evaluating the hepatic gene transcript levels of rats at various stages of 2-acetylaminofluorene-induced hepatocarcinogenesis.</title>
        <authorList>
            <person name="Yerokun T."/>
            <person name="Etheredge J.L."/>
            <person name="Norton T.R."/>
            <person name="Carter H.A."/>
            <person name="Chung K.H."/>
            <person name="Birckbichler P.J."/>
            <person name="Ringer D.P."/>
        </authorList>
    </citation>
    <scope>NUCLEOTIDE SEQUENCE [MRNA] OF 7-291</scope>
</reference>
<reference key="6">
    <citation type="journal article" date="1994" name="J. Biol. Chem.">
        <title>Affinity labeling of aryl sulfotransferase IV. Identification of a peptide sequence at the binding site for 3'-phosphoadenosine-5'-phosphosulfate.</title>
        <authorList>
            <person name="Zheng Y."/>
            <person name="Bergold A."/>
            <person name="Duffel M.W."/>
        </authorList>
    </citation>
    <scope>PROTEIN SEQUENCE OF 63-68</scope>
    <scope>CHARACTERIZATION</scope>
</reference>
<reference key="7">
    <citation type="journal article" date="1993" name="Biochem. Biophys. Res. Commun.">
        <title>cDNA expression studies of rat liver aryl sulphotransferase.</title>
        <authorList>
            <person name="Cruickshank D."/>
            <person name="Sansom L.N."/>
            <person name="Veronese M.E."/>
            <person name="Mojarrabi B."/>
            <person name="McManus M.E."/>
            <person name="Zhu X."/>
        </authorList>
    </citation>
    <scope>CATALYTIC ACTIVITY</scope>
    <scope>FUNCTION</scope>
    <source>
        <tissue>Liver</tissue>
    </source>
</reference>
<reference key="8">
    <citation type="journal article" date="1994" name="Environ. Health Perspect.">
        <title>Characterization and expression of hepatic sulfotransferase involved in the metabolism of N-substituted aryl compounds.</title>
        <authorList>
            <person name="Yamazoe Y."/>
            <person name="Ozawa S."/>
            <person name="Nagata K."/>
            <person name="Gong D.-W."/>
            <person name="Kato R."/>
        </authorList>
    </citation>
    <scope>CATALYTIC ACTIVITY</scope>
    <scope>FUNCTION</scope>
</reference>
<reference key="9">
    <citation type="journal article" date="1994" name="Chem. Biol. Interact.">
        <title>Sulfotransferase gene expression in rat hepatic and extrahepatic tissues.</title>
        <authorList>
            <person name="Runge-Morris M.A."/>
        </authorList>
    </citation>
    <scope>TISSUE SPECIFICITY</scope>
</reference>
<reference key="10">
    <citation type="journal article" date="2012" name="Nat. Commun.">
        <title>Quantitative maps of protein phosphorylation sites across 14 different rat organs and tissues.</title>
        <authorList>
            <person name="Lundby A."/>
            <person name="Secher A."/>
            <person name="Lage K."/>
            <person name="Nordsborg N.B."/>
            <person name="Dmytriyev A."/>
            <person name="Lundby C."/>
            <person name="Olsen J.V."/>
        </authorList>
    </citation>
    <scope>PHOSPHORYLATION [LARGE SCALE ANALYSIS] AT SER-134</scope>
    <scope>IDENTIFICATION BY MASS SPECTROMETRY [LARGE SCALE ANALYSIS]</scope>
</reference>
<dbReference type="EC" id="2.8.2.1" evidence="3 4 6"/>
<dbReference type="EMBL" id="X52883">
    <property type="protein sequence ID" value="CAA37065.1"/>
    <property type="molecule type" value="mRNA"/>
</dbReference>
<dbReference type="EMBL" id="L19998">
    <property type="protein sequence ID" value="AAA41644.1"/>
    <property type="molecule type" value="mRNA"/>
</dbReference>
<dbReference type="EMBL" id="L16241">
    <property type="status" value="NOT_ANNOTATED_CDS"/>
    <property type="molecule type" value="Genomic_DNA"/>
</dbReference>
<dbReference type="EMBL" id="AF394783">
    <property type="protein sequence ID" value="AAK77559.1"/>
    <property type="molecule type" value="mRNA"/>
</dbReference>
<dbReference type="EMBL" id="X68640">
    <property type="protein sequence ID" value="CAA48604.1"/>
    <property type="molecule type" value="mRNA"/>
</dbReference>
<dbReference type="PIR" id="S10329">
    <property type="entry name" value="S10329"/>
</dbReference>
<dbReference type="RefSeq" id="NP_114022.1">
    <property type="nucleotide sequence ID" value="NM_031834.2"/>
</dbReference>
<dbReference type="SMR" id="P17988"/>
<dbReference type="FunCoup" id="P17988">
    <property type="interactions" value="86"/>
</dbReference>
<dbReference type="STRING" id="10116.ENSRNOP00000026186"/>
<dbReference type="BindingDB" id="P17988"/>
<dbReference type="ChEMBL" id="CHEMBL4886"/>
<dbReference type="iPTMnet" id="P17988"/>
<dbReference type="PhosphoSitePlus" id="P17988"/>
<dbReference type="PaxDb" id="10116-ENSRNOP00000026186"/>
<dbReference type="Ensembl" id="ENSRNOT00000026186.5">
    <property type="protein sequence ID" value="ENSRNOP00000026186.1"/>
    <property type="gene ID" value="ENSRNOG00000019342.5"/>
</dbReference>
<dbReference type="GeneID" id="83783"/>
<dbReference type="KEGG" id="rno:83783"/>
<dbReference type="UCSC" id="RGD:3767">
    <property type="organism name" value="rat"/>
</dbReference>
<dbReference type="AGR" id="RGD:3767"/>
<dbReference type="CTD" id="6817"/>
<dbReference type="RGD" id="3767">
    <property type="gene designation" value="Sult1a1"/>
</dbReference>
<dbReference type="eggNOG" id="KOG1584">
    <property type="taxonomic scope" value="Eukaryota"/>
</dbReference>
<dbReference type="GeneTree" id="ENSGT00940000162765"/>
<dbReference type="HOGENOM" id="CLU_027239_1_2_1"/>
<dbReference type="InParanoid" id="P17988"/>
<dbReference type="OMA" id="YNFYNMA"/>
<dbReference type="OrthoDB" id="205623at2759"/>
<dbReference type="PhylomeDB" id="P17988"/>
<dbReference type="TreeFam" id="TF321745"/>
<dbReference type="BRENDA" id="2.8.2.1">
    <property type="organism ID" value="5301"/>
</dbReference>
<dbReference type="Reactome" id="R-RNO-156584">
    <property type="pathway name" value="Cytosolic sulfonation of small molecules"/>
</dbReference>
<dbReference type="Reactome" id="R-RNO-9753281">
    <property type="pathway name" value="Paracetamol ADME"/>
</dbReference>
<dbReference type="PRO" id="PR:P17988"/>
<dbReference type="Proteomes" id="UP000002494">
    <property type="component" value="Chromosome 1"/>
</dbReference>
<dbReference type="Bgee" id="ENSRNOG00000019342">
    <property type="expression patterns" value="Expressed in liver and 20 other cell types or tissues"/>
</dbReference>
<dbReference type="GO" id="GO:0005737">
    <property type="term" value="C:cytoplasm"/>
    <property type="evidence" value="ECO:0000318"/>
    <property type="project" value="GO_Central"/>
</dbReference>
<dbReference type="GO" id="GO:0050656">
    <property type="term" value="F:3'-phosphoadenosine 5'-phosphosulfate binding"/>
    <property type="evidence" value="ECO:0000314"/>
    <property type="project" value="RGD"/>
</dbReference>
<dbReference type="GO" id="GO:0004062">
    <property type="term" value="F:aryl sulfotransferase activity"/>
    <property type="evidence" value="ECO:0000314"/>
    <property type="project" value="RGD"/>
</dbReference>
<dbReference type="GO" id="GO:0047894">
    <property type="term" value="F:flavonol 3-sulfotransferase activity"/>
    <property type="evidence" value="ECO:0000266"/>
    <property type="project" value="RGD"/>
</dbReference>
<dbReference type="GO" id="GO:0042802">
    <property type="term" value="F:identical protein binding"/>
    <property type="evidence" value="ECO:0000353"/>
    <property type="project" value="RGD"/>
</dbReference>
<dbReference type="GO" id="GO:0050294">
    <property type="term" value="F:steroid sulfotransferase activity"/>
    <property type="evidence" value="ECO:0000266"/>
    <property type="project" value="RGD"/>
</dbReference>
<dbReference type="GO" id="GO:0008146">
    <property type="term" value="F:sulfotransferase activity"/>
    <property type="evidence" value="ECO:0000314"/>
    <property type="project" value="RGD"/>
</dbReference>
<dbReference type="GO" id="GO:0050427">
    <property type="term" value="P:3'-phosphoadenosine 5'-phosphosulfate metabolic process"/>
    <property type="evidence" value="ECO:0000266"/>
    <property type="project" value="RGD"/>
</dbReference>
<dbReference type="GO" id="GO:0018960">
    <property type="term" value="P:4-nitrophenol metabolic process"/>
    <property type="evidence" value="ECO:0000314"/>
    <property type="project" value="RGD"/>
</dbReference>
<dbReference type="GO" id="GO:0006584">
    <property type="term" value="P:catecholamine metabolic process"/>
    <property type="evidence" value="ECO:0000314"/>
    <property type="project" value="RGD"/>
</dbReference>
<dbReference type="GO" id="GO:0042420">
    <property type="term" value="P:dopamine catabolic process"/>
    <property type="evidence" value="ECO:0000250"/>
    <property type="project" value="UniProtKB"/>
</dbReference>
<dbReference type="GO" id="GO:0008210">
    <property type="term" value="P:estrogen metabolic process"/>
    <property type="evidence" value="ECO:0000315"/>
    <property type="project" value="RGD"/>
</dbReference>
<dbReference type="GO" id="GO:0006068">
    <property type="term" value="P:ethanol catabolic process"/>
    <property type="evidence" value="ECO:0000266"/>
    <property type="project" value="RGD"/>
</dbReference>
<dbReference type="GO" id="GO:0009812">
    <property type="term" value="P:flavonoid metabolic process"/>
    <property type="evidence" value="ECO:0000266"/>
    <property type="project" value="RGD"/>
</dbReference>
<dbReference type="GO" id="GO:0008217">
    <property type="term" value="P:regulation of blood pressure"/>
    <property type="evidence" value="ECO:0000270"/>
    <property type="project" value="RGD"/>
</dbReference>
<dbReference type="GO" id="GO:0014823">
    <property type="term" value="P:response to activity"/>
    <property type="evidence" value="ECO:0000270"/>
    <property type="project" value="RGD"/>
</dbReference>
<dbReference type="GO" id="GO:0051384">
    <property type="term" value="P:response to glucocorticoid"/>
    <property type="evidence" value="ECO:0000315"/>
    <property type="project" value="RGD"/>
</dbReference>
<dbReference type="GO" id="GO:0017085">
    <property type="term" value="P:response to insecticide"/>
    <property type="evidence" value="ECO:0000270"/>
    <property type="project" value="RGD"/>
</dbReference>
<dbReference type="GO" id="GO:0051923">
    <property type="term" value="P:sulfation"/>
    <property type="evidence" value="ECO:0000314"/>
    <property type="project" value="RGD"/>
</dbReference>
<dbReference type="GO" id="GO:0042403">
    <property type="term" value="P:thyroid hormone metabolic process"/>
    <property type="evidence" value="ECO:0000250"/>
    <property type="project" value="UniProtKB"/>
</dbReference>
<dbReference type="GO" id="GO:0006805">
    <property type="term" value="P:xenobiotic metabolic process"/>
    <property type="evidence" value="ECO:0000314"/>
    <property type="project" value="RGD"/>
</dbReference>
<dbReference type="FunFam" id="3.40.50.300:FF:000433">
    <property type="entry name" value="Estrogen sulfotransferase"/>
    <property type="match status" value="1"/>
</dbReference>
<dbReference type="Gene3D" id="3.40.50.300">
    <property type="entry name" value="P-loop containing nucleotide triphosphate hydrolases"/>
    <property type="match status" value="1"/>
</dbReference>
<dbReference type="InterPro" id="IPR027417">
    <property type="entry name" value="P-loop_NTPase"/>
</dbReference>
<dbReference type="InterPro" id="IPR000863">
    <property type="entry name" value="Sulfotransferase_dom"/>
</dbReference>
<dbReference type="PANTHER" id="PTHR11783">
    <property type="entry name" value="SULFOTRANSFERASE SULT"/>
    <property type="match status" value="1"/>
</dbReference>
<dbReference type="Pfam" id="PF00685">
    <property type="entry name" value="Sulfotransfer_1"/>
    <property type="match status" value="1"/>
</dbReference>
<dbReference type="SUPFAM" id="SSF52540">
    <property type="entry name" value="P-loop containing nucleoside triphosphate hydrolases"/>
    <property type="match status" value="1"/>
</dbReference>